<sequence>MDPTAPLADTIAAIATAVVPEQGSVGIVRLSGSRALPIVQAIFTPARRNAVWESHRLLYGWIRDEKGQILDEALAVWMQAPRSYTREDVAELHCHGGIMVVQATLQQCLRQGARLAQPGEFSLRAFLNGRIDLTQAESVADLVAARSPQAARMALAGLQGKLGGSIRALRQELLGLLAEIEARLDFEEDLPPLDVAAWQARLQAIQTQIQALLATAERGQLLRTGVKVAIVGRPNVGKSSLLNAWSGQDRAIVTDLPGTTRDVVESHLVVKGIPVQLLDTAGIRATEDPVERLGVERSQRLAQAADVLVLVIDAQAGWTAADAAIYESIRHRPLILVINKTDLAPPEGIPLPPEIAHRVPAVAAQGKGIPELEEALEQLVTQGRPQPNLEISLNQRQAAALQQAQASLEQVGQAIQAQLPLDFWSIDLRGALHALGQITGEEISESVLDQIFSRFCIGK</sequence>
<evidence type="ECO:0000255" key="1">
    <source>
        <dbReference type="HAMAP-Rule" id="MF_00379"/>
    </source>
</evidence>
<organism>
    <name type="scientific">Synechococcus sp. (strain JA-2-3B'a(2-13))</name>
    <name type="common">Cyanobacteria bacterium Yellowstone B-Prime</name>
    <dbReference type="NCBI Taxonomy" id="321332"/>
    <lineage>
        <taxon>Bacteria</taxon>
        <taxon>Bacillati</taxon>
        <taxon>Cyanobacteriota</taxon>
        <taxon>Cyanophyceae</taxon>
        <taxon>Synechococcales</taxon>
        <taxon>Synechococcaceae</taxon>
        <taxon>Synechococcus</taxon>
    </lineage>
</organism>
<protein>
    <recommendedName>
        <fullName evidence="1">tRNA modification GTPase MnmE</fullName>
        <ecNumber evidence="1">3.6.-.-</ecNumber>
    </recommendedName>
</protein>
<gene>
    <name evidence="1" type="primary">mnmE</name>
    <name evidence="1" type="synonym">trmE</name>
    <name type="ordered locus">CYB_2687</name>
</gene>
<keyword id="KW-0963">Cytoplasm</keyword>
<keyword id="KW-0342">GTP-binding</keyword>
<keyword id="KW-0378">Hydrolase</keyword>
<keyword id="KW-0460">Magnesium</keyword>
<keyword id="KW-0479">Metal-binding</keyword>
<keyword id="KW-0547">Nucleotide-binding</keyword>
<keyword id="KW-0630">Potassium</keyword>
<keyword id="KW-1185">Reference proteome</keyword>
<keyword id="KW-0819">tRNA processing</keyword>
<accession>Q2JIE6</accession>
<dbReference type="EC" id="3.6.-.-" evidence="1"/>
<dbReference type="EMBL" id="CP000240">
    <property type="protein sequence ID" value="ABD03613.1"/>
    <property type="molecule type" value="Genomic_DNA"/>
</dbReference>
<dbReference type="RefSeq" id="WP_011434231.1">
    <property type="nucleotide sequence ID" value="NC_007776.1"/>
</dbReference>
<dbReference type="SMR" id="Q2JIE6"/>
<dbReference type="STRING" id="321332.CYB_2687"/>
<dbReference type="KEGG" id="cyb:CYB_2687"/>
<dbReference type="eggNOG" id="COG0486">
    <property type="taxonomic scope" value="Bacteria"/>
</dbReference>
<dbReference type="HOGENOM" id="CLU_019624_4_1_3"/>
<dbReference type="OrthoDB" id="9805918at2"/>
<dbReference type="Proteomes" id="UP000001938">
    <property type="component" value="Chromosome"/>
</dbReference>
<dbReference type="GO" id="GO:0005829">
    <property type="term" value="C:cytosol"/>
    <property type="evidence" value="ECO:0007669"/>
    <property type="project" value="TreeGrafter"/>
</dbReference>
<dbReference type="GO" id="GO:0005525">
    <property type="term" value="F:GTP binding"/>
    <property type="evidence" value="ECO:0007669"/>
    <property type="project" value="UniProtKB-UniRule"/>
</dbReference>
<dbReference type="GO" id="GO:0003924">
    <property type="term" value="F:GTPase activity"/>
    <property type="evidence" value="ECO:0007669"/>
    <property type="project" value="UniProtKB-UniRule"/>
</dbReference>
<dbReference type="GO" id="GO:0046872">
    <property type="term" value="F:metal ion binding"/>
    <property type="evidence" value="ECO:0007669"/>
    <property type="project" value="UniProtKB-KW"/>
</dbReference>
<dbReference type="GO" id="GO:0030488">
    <property type="term" value="P:tRNA methylation"/>
    <property type="evidence" value="ECO:0007669"/>
    <property type="project" value="TreeGrafter"/>
</dbReference>
<dbReference type="GO" id="GO:0002098">
    <property type="term" value="P:tRNA wobble uridine modification"/>
    <property type="evidence" value="ECO:0007669"/>
    <property type="project" value="TreeGrafter"/>
</dbReference>
<dbReference type="CDD" id="cd04164">
    <property type="entry name" value="trmE"/>
    <property type="match status" value="1"/>
</dbReference>
<dbReference type="CDD" id="cd14858">
    <property type="entry name" value="TrmE_N"/>
    <property type="match status" value="1"/>
</dbReference>
<dbReference type="FunFam" id="3.30.1360.120:FF:000003">
    <property type="entry name" value="tRNA modification GTPase MnmE"/>
    <property type="match status" value="1"/>
</dbReference>
<dbReference type="FunFam" id="3.40.50.300:FF:000494">
    <property type="entry name" value="tRNA modification GTPase MnmE"/>
    <property type="match status" value="1"/>
</dbReference>
<dbReference type="Gene3D" id="3.40.50.300">
    <property type="entry name" value="P-loop containing nucleotide triphosphate hydrolases"/>
    <property type="match status" value="1"/>
</dbReference>
<dbReference type="Gene3D" id="3.30.1360.120">
    <property type="entry name" value="Probable tRNA modification gtpase trme, domain 1"/>
    <property type="match status" value="1"/>
</dbReference>
<dbReference type="Gene3D" id="1.20.120.430">
    <property type="entry name" value="tRNA modification GTPase MnmE domain 2"/>
    <property type="match status" value="1"/>
</dbReference>
<dbReference type="HAMAP" id="MF_00379">
    <property type="entry name" value="GTPase_MnmE"/>
    <property type="match status" value="1"/>
</dbReference>
<dbReference type="InterPro" id="IPR031168">
    <property type="entry name" value="G_TrmE"/>
</dbReference>
<dbReference type="InterPro" id="IPR006073">
    <property type="entry name" value="GTP-bd"/>
</dbReference>
<dbReference type="InterPro" id="IPR018948">
    <property type="entry name" value="GTP-bd_TrmE_N"/>
</dbReference>
<dbReference type="InterPro" id="IPR004520">
    <property type="entry name" value="GTPase_MnmE"/>
</dbReference>
<dbReference type="InterPro" id="IPR027368">
    <property type="entry name" value="MnmE_dom2"/>
</dbReference>
<dbReference type="InterPro" id="IPR025867">
    <property type="entry name" value="MnmE_helical"/>
</dbReference>
<dbReference type="InterPro" id="IPR027417">
    <property type="entry name" value="P-loop_NTPase"/>
</dbReference>
<dbReference type="InterPro" id="IPR005225">
    <property type="entry name" value="Small_GTP-bd"/>
</dbReference>
<dbReference type="InterPro" id="IPR027266">
    <property type="entry name" value="TrmE/GcvT_dom1"/>
</dbReference>
<dbReference type="NCBIfam" id="TIGR00450">
    <property type="entry name" value="mnmE_trmE_thdF"/>
    <property type="match status" value="1"/>
</dbReference>
<dbReference type="NCBIfam" id="NF003661">
    <property type="entry name" value="PRK05291.1-3"/>
    <property type="match status" value="1"/>
</dbReference>
<dbReference type="NCBIfam" id="TIGR00231">
    <property type="entry name" value="small_GTP"/>
    <property type="match status" value="1"/>
</dbReference>
<dbReference type="PANTHER" id="PTHR42714">
    <property type="entry name" value="TRNA MODIFICATION GTPASE GTPBP3"/>
    <property type="match status" value="1"/>
</dbReference>
<dbReference type="PANTHER" id="PTHR42714:SF2">
    <property type="entry name" value="TRNA MODIFICATION GTPASE GTPBP3, MITOCHONDRIAL"/>
    <property type="match status" value="1"/>
</dbReference>
<dbReference type="Pfam" id="PF01926">
    <property type="entry name" value="MMR_HSR1"/>
    <property type="match status" value="1"/>
</dbReference>
<dbReference type="Pfam" id="PF12631">
    <property type="entry name" value="MnmE_helical"/>
    <property type="match status" value="1"/>
</dbReference>
<dbReference type="Pfam" id="PF10396">
    <property type="entry name" value="TrmE_N"/>
    <property type="match status" value="1"/>
</dbReference>
<dbReference type="SUPFAM" id="SSF52540">
    <property type="entry name" value="P-loop containing nucleoside triphosphate hydrolases"/>
    <property type="match status" value="1"/>
</dbReference>
<dbReference type="SUPFAM" id="SSF116878">
    <property type="entry name" value="TrmE connector domain"/>
    <property type="match status" value="1"/>
</dbReference>
<dbReference type="PROSITE" id="PS51709">
    <property type="entry name" value="G_TRME"/>
    <property type="match status" value="1"/>
</dbReference>
<feature type="chain" id="PRO_0000345918" description="tRNA modification GTPase MnmE">
    <location>
        <begin position="1"/>
        <end position="459"/>
    </location>
</feature>
<feature type="domain" description="TrmE-type G">
    <location>
        <begin position="225"/>
        <end position="381"/>
    </location>
</feature>
<feature type="binding site" evidence="1">
    <location>
        <position position="29"/>
    </location>
    <ligand>
        <name>(6S)-5-formyl-5,6,7,8-tetrahydrofolate</name>
        <dbReference type="ChEBI" id="CHEBI:57457"/>
    </ligand>
</feature>
<feature type="binding site" evidence="1">
    <location>
        <position position="91"/>
    </location>
    <ligand>
        <name>(6S)-5-formyl-5,6,7,8-tetrahydrofolate</name>
        <dbReference type="ChEBI" id="CHEBI:57457"/>
    </ligand>
</feature>
<feature type="binding site" evidence="1">
    <location>
        <position position="130"/>
    </location>
    <ligand>
        <name>(6S)-5-formyl-5,6,7,8-tetrahydrofolate</name>
        <dbReference type="ChEBI" id="CHEBI:57457"/>
    </ligand>
</feature>
<feature type="binding site" evidence="1">
    <location>
        <begin position="235"/>
        <end position="240"/>
    </location>
    <ligand>
        <name>GTP</name>
        <dbReference type="ChEBI" id="CHEBI:37565"/>
    </ligand>
</feature>
<feature type="binding site" evidence="1">
    <location>
        <position position="235"/>
    </location>
    <ligand>
        <name>K(+)</name>
        <dbReference type="ChEBI" id="CHEBI:29103"/>
    </ligand>
</feature>
<feature type="binding site" evidence="1">
    <location>
        <position position="239"/>
    </location>
    <ligand>
        <name>Mg(2+)</name>
        <dbReference type="ChEBI" id="CHEBI:18420"/>
    </ligand>
</feature>
<feature type="binding site" evidence="1">
    <location>
        <begin position="254"/>
        <end position="260"/>
    </location>
    <ligand>
        <name>GTP</name>
        <dbReference type="ChEBI" id="CHEBI:37565"/>
    </ligand>
</feature>
<feature type="binding site" evidence="1">
    <location>
        <position position="254"/>
    </location>
    <ligand>
        <name>K(+)</name>
        <dbReference type="ChEBI" id="CHEBI:29103"/>
    </ligand>
</feature>
<feature type="binding site" evidence="1">
    <location>
        <position position="256"/>
    </location>
    <ligand>
        <name>K(+)</name>
        <dbReference type="ChEBI" id="CHEBI:29103"/>
    </ligand>
</feature>
<feature type="binding site" evidence="1">
    <location>
        <position position="259"/>
    </location>
    <ligand>
        <name>K(+)</name>
        <dbReference type="ChEBI" id="CHEBI:29103"/>
    </ligand>
</feature>
<feature type="binding site" evidence="1">
    <location>
        <position position="260"/>
    </location>
    <ligand>
        <name>Mg(2+)</name>
        <dbReference type="ChEBI" id="CHEBI:18420"/>
    </ligand>
</feature>
<feature type="binding site" evidence="1">
    <location>
        <begin position="279"/>
        <end position="282"/>
    </location>
    <ligand>
        <name>GTP</name>
        <dbReference type="ChEBI" id="CHEBI:37565"/>
    </ligand>
</feature>
<feature type="binding site" evidence="1">
    <location>
        <position position="459"/>
    </location>
    <ligand>
        <name>(6S)-5-formyl-5,6,7,8-tetrahydrofolate</name>
        <dbReference type="ChEBI" id="CHEBI:57457"/>
    </ligand>
</feature>
<comment type="function">
    <text evidence="1">Exhibits a very high intrinsic GTPase hydrolysis rate. Involved in the addition of a carboxymethylaminomethyl (cmnm) group at the wobble position (U34) of certain tRNAs, forming tRNA-cmnm(5)s(2)U34.</text>
</comment>
<comment type="cofactor">
    <cofactor evidence="1">
        <name>K(+)</name>
        <dbReference type="ChEBI" id="CHEBI:29103"/>
    </cofactor>
    <text evidence="1">Binds 1 potassium ion per subunit.</text>
</comment>
<comment type="subunit">
    <text evidence="1">Homodimer. Heterotetramer of two MnmE and two MnmG subunits.</text>
</comment>
<comment type="subcellular location">
    <subcellularLocation>
        <location evidence="1">Cytoplasm</location>
    </subcellularLocation>
</comment>
<comment type="similarity">
    <text evidence="1">Belongs to the TRAFAC class TrmE-Era-EngA-EngB-Septin-like GTPase superfamily. TrmE GTPase family.</text>
</comment>
<proteinExistence type="inferred from homology"/>
<name>MNME_SYNJB</name>
<reference key="1">
    <citation type="journal article" date="2007" name="ISME J.">
        <title>Population level functional diversity in a microbial community revealed by comparative genomic and metagenomic analyses.</title>
        <authorList>
            <person name="Bhaya D."/>
            <person name="Grossman A.R."/>
            <person name="Steunou A.-S."/>
            <person name="Khuri N."/>
            <person name="Cohan F.M."/>
            <person name="Hamamura N."/>
            <person name="Melendrez M.C."/>
            <person name="Bateson M.M."/>
            <person name="Ward D.M."/>
            <person name="Heidelberg J.F."/>
        </authorList>
    </citation>
    <scope>NUCLEOTIDE SEQUENCE [LARGE SCALE GENOMIC DNA]</scope>
    <source>
        <strain>JA-2-3B'a(2-13)</strain>
    </source>
</reference>